<reference key="1">
    <citation type="journal article" date="2009" name="PLoS Genet.">
        <title>Organised genome dynamics in the Escherichia coli species results in highly diverse adaptive paths.</title>
        <authorList>
            <person name="Touchon M."/>
            <person name="Hoede C."/>
            <person name="Tenaillon O."/>
            <person name="Barbe V."/>
            <person name="Baeriswyl S."/>
            <person name="Bidet P."/>
            <person name="Bingen E."/>
            <person name="Bonacorsi S."/>
            <person name="Bouchier C."/>
            <person name="Bouvet O."/>
            <person name="Calteau A."/>
            <person name="Chiapello H."/>
            <person name="Clermont O."/>
            <person name="Cruveiller S."/>
            <person name="Danchin A."/>
            <person name="Diard M."/>
            <person name="Dossat C."/>
            <person name="Karoui M.E."/>
            <person name="Frapy E."/>
            <person name="Garry L."/>
            <person name="Ghigo J.M."/>
            <person name="Gilles A.M."/>
            <person name="Johnson J."/>
            <person name="Le Bouguenec C."/>
            <person name="Lescat M."/>
            <person name="Mangenot S."/>
            <person name="Martinez-Jehanne V."/>
            <person name="Matic I."/>
            <person name="Nassif X."/>
            <person name="Oztas S."/>
            <person name="Petit M.A."/>
            <person name="Pichon C."/>
            <person name="Rouy Z."/>
            <person name="Ruf C.S."/>
            <person name="Schneider D."/>
            <person name="Tourret J."/>
            <person name="Vacherie B."/>
            <person name="Vallenet D."/>
            <person name="Medigue C."/>
            <person name="Rocha E.P.C."/>
            <person name="Denamur E."/>
        </authorList>
    </citation>
    <scope>NUCLEOTIDE SEQUENCE [LARGE SCALE GENOMIC DNA]</scope>
    <source>
        <strain>IAI1</strain>
    </source>
</reference>
<evidence type="ECO:0000255" key="1">
    <source>
        <dbReference type="HAMAP-Rule" id="MF_01551"/>
    </source>
</evidence>
<name>RLMM_ECO8A</name>
<feature type="chain" id="PRO_1000201519" description="Ribosomal RNA large subunit methyltransferase M">
    <location>
        <begin position="1"/>
        <end position="366"/>
    </location>
</feature>
<feature type="active site" description="Proton acceptor" evidence="1">
    <location>
        <position position="306"/>
    </location>
</feature>
<feature type="binding site" evidence="1">
    <location>
        <position position="188"/>
    </location>
    <ligand>
        <name>S-adenosyl-L-methionine</name>
        <dbReference type="ChEBI" id="CHEBI:59789"/>
    </ligand>
</feature>
<feature type="binding site" evidence="1">
    <location>
        <begin position="221"/>
        <end position="224"/>
    </location>
    <ligand>
        <name>S-adenosyl-L-methionine</name>
        <dbReference type="ChEBI" id="CHEBI:59789"/>
    </ligand>
</feature>
<feature type="binding site" evidence="1">
    <location>
        <position position="240"/>
    </location>
    <ligand>
        <name>S-adenosyl-L-methionine</name>
        <dbReference type="ChEBI" id="CHEBI:59789"/>
    </ligand>
</feature>
<feature type="binding site" evidence="1">
    <location>
        <position position="260"/>
    </location>
    <ligand>
        <name>S-adenosyl-L-methionine</name>
        <dbReference type="ChEBI" id="CHEBI:59789"/>
    </ligand>
</feature>
<feature type="binding site" evidence="1">
    <location>
        <position position="277"/>
    </location>
    <ligand>
        <name>S-adenosyl-L-methionine</name>
        <dbReference type="ChEBI" id="CHEBI:59789"/>
    </ligand>
</feature>
<accession>B7LXM2</accession>
<sequence length="366" mass="41905">MNKVVLLCRPGFEKECAAEITDKAGQREIFGFARVKENAGYVIYECYQPDDGDKLIRELPFSSLIFARQWFVVGELLQHLPPEDRITPIVGMLQGVVEKGGELRVEVADTNESKELLKFCRKFTVPLRAALRDAGVLANYETPKRPVVHVFFIAPGCCYTGYSYSNNNSPFYMGIPRLKFPADAPSRSTLKLEEAFHVFIPADEWDERLANGMWAVDLGACPGGWTYQLVKRNMWVYSVDNGPMAQSLMDTGQVTWLREDGFKFRPTRSNISWMVCDMVEKPAKVAALMAQWLVNGWCRETIFNLKLPMKKRYEEVSHNLAYIQAQLDEHGINAQIQARQLYHDREEVTVHVRRIWAAVGGRRDER</sequence>
<comment type="function">
    <text evidence="1">Catalyzes the 2'-O-methylation at nucleotide C2498 in 23S rRNA.</text>
</comment>
<comment type="catalytic activity">
    <reaction evidence="1">
        <text>cytidine(2498) in 23S rRNA + S-adenosyl-L-methionine = 2'-O-methylcytidine(2498) in 23S rRNA + S-adenosyl-L-homocysteine + H(+)</text>
        <dbReference type="Rhea" id="RHEA:42788"/>
        <dbReference type="Rhea" id="RHEA-COMP:10244"/>
        <dbReference type="Rhea" id="RHEA-COMP:10245"/>
        <dbReference type="ChEBI" id="CHEBI:15378"/>
        <dbReference type="ChEBI" id="CHEBI:57856"/>
        <dbReference type="ChEBI" id="CHEBI:59789"/>
        <dbReference type="ChEBI" id="CHEBI:74495"/>
        <dbReference type="ChEBI" id="CHEBI:82748"/>
        <dbReference type="EC" id="2.1.1.186"/>
    </reaction>
</comment>
<comment type="subunit">
    <text evidence="1">Monomer.</text>
</comment>
<comment type="subcellular location">
    <subcellularLocation>
        <location evidence="1">Cytoplasm</location>
    </subcellularLocation>
</comment>
<comment type="similarity">
    <text evidence="1">Belongs to the class I-like SAM-binding methyltransferase superfamily. RNA methyltransferase RlmE family. RlmM subfamily.</text>
</comment>
<gene>
    <name evidence="1" type="primary">rlmM</name>
    <name type="ordered locus">ECIAI1_2916</name>
</gene>
<keyword id="KW-0963">Cytoplasm</keyword>
<keyword id="KW-0489">Methyltransferase</keyword>
<keyword id="KW-0698">rRNA processing</keyword>
<keyword id="KW-0949">S-adenosyl-L-methionine</keyword>
<keyword id="KW-0808">Transferase</keyword>
<protein>
    <recommendedName>
        <fullName evidence="1">Ribosomal RNA large subunit methyltransferase M</fullName>
        <ecNumber evidence="1">2.1.1.186</ecNumber>
    </recommendedName>
    <alternativeName>
        <fullName evidence="1">23S rRNA (cytidine2498-2'-O)-methyltransferase</fullName>
    </alternativeName>
    <alternativeName>
        <fullName evidence="1">23S rRNA 2'-O-ribose methyltransferase RlmM</fullName>
    </alternativeName>
</protein>
<proteinExistence type="inferred from homology"/>
<dbReference type="EC" id="2.1.1.186" evidence="1"/>
<dbReference type="EMBL" id="CU928160">
    <property type="protein sequence ID" value="CAQ99734.1"/>
    <property type="molecule type" value="Genomic_DNA"/>
</dbReference>
<dbReference type="RefSeq" id="WP_001045520.1">
    <property type="nucleotide sequence ID" value="NC_011741.1"/>
</dbReference>
<dbReference type="SMR" id="B7LXM2"/>
<dbReference type="GeneID" id="75203803"/>
<dbReference type="KEGG" id="ecr:ECIAI1_2916"/>
<dbReference type="HOGENOM" id="CLU_043780_0_0_6"/>
<dbReference type="GO" id="GO:0005737">
    <property type="term" value="C:cytoplasm"/>
    <property type="evidence" value="ECO:0007669"/>
    <property type="project" value="UniProtKB-SubCell"/>
</dbReference>
<dbReference type="GO" id="GO:0008757">
    <property type="term" value="F:S-adenosylmethionine-dependent methyltransferase activity"/>
    <property type="evidence" value="ECO:0007669"/>
    <property type="project" value="UniProtKB-UniRule"/>
</dbReference>
<dbReference type="GO" id="GO:0032259">
    <property type="term" value="P:methylation"/>
    <property type="evidence" value="ECO:0007669"/>
    <property type="project" value="UniProtKB-KW"/>
</dbReference>
<dbReference type="GO" id="GO:0006364">
    <property type="term" value="P:rRNA processing"/>
    <property type="evidence" value="ECO:0007669"/>
    <property type="project" value="UniProtKB-UniRule"/>
</dbReference>
<dbReference type="FunFam" id="3.30.2300.20:FF:000001">
    <property type="entry name" value="Ribosomal RNA large subunit methyltransferase M"/>
    <property type="match status" value="1"/>
</dbReference>
<dbReference type="FunFam" id="3.30.70.2810:FF:000001">
    <property type="entry name" value="Ribosomal RNA large subunit methyltransferase M"/>
    <property type="match status" value="1"/>
</dbReference>
<dbReference type="FunFam" id="3.40.50.150:FF:000020">
    <property type="entry name" value="Ribosomal RNA large subunit methyltransferase M"/>
    <property type="match status" value="1"/>
</dbReference>
<dbReference type="Gene3D" id="3.30.2300.20">
    <property type="match status" value="1"/>
</dbReference>
<dbReference type="Gene3D" id="3.30.70.2810">
    <property type="match status" value="1"/>
</dbReference>
<dbReference type="Gene3D" id="3.40.50.150">
    <property type="entry name" value="Vaccinia Virus protein VP39"/>
    <property type="match status" value="1"/>
</dbReference>
<dbReference type="HAMAP" id="MF_01551">
    <property type="entry name" value="23SrRNA_methyltr_M"/>
    <property type="match status" value="1"/>
</dbReference>
<dbReference type="InterPro" id="IPR040739">
    <property type="entry name" value="RlmM_FDX"/>
</dbReference>
<dbReference type="InterPro" id="IPR048646">
    <property type="entry name" value="RlmM_THUMP-like"/>
</dbReference>
<dbReference type="InterPro" id="IPR002877">
    <property type="entry name" value="RNA_MeTrfase_FtsJ_dom"/>
</dbReference>
<dbReference type="InterPro" id="IPR011224">
    <property type="entry name" value="rRNA_MeTrfase_M"/>
</dbReference>
<dbReference type="InterPro" id="IPR029063">
    <property type="entry name" value="SAM-dependent_MTases_sf"/>
</dbReference>
<dbReference type="NCBIfam" id="NF008734">
    <property type="entry name" value="PRK11760.1"/>
    <property type="match status" value="1"/>
</dbReference>
<dbReference type="PANTHER" id="PTHR37524">
    <property type="entry name" value="RIBOSOMAL RNA LARGE SUBUNIT METHYLTRANSFERASE M"/>
    <property type="match status" value="1"/>
</dbReference>
<dbReference type="PANTHER" id="PTHR37524:SF2">
    <property type="entry name" value="RIBOSOMAL RNA METHYLTRANSFERASE FTSJ DOMAIN-CONTAINING PROTEIN"/>
    <property type="match status" value="1"/>
</dbReference>
<dbReference type="Pfam" id="PF01728">
    <property type="entry name" value="FtsJ"/>
    <property type="match status" value="1"/>
</dbReference>
<dbReference type="Pfam" id="PF18125">
    <property type="entry name" value="RlmM_FDX"/>
    <property type="match status" value="1"/>
</dbReference>
<dbReference type="Pfam" id="PF21239">
    <property type="entry name" value="RLMM_N"/>
    <property type="match status" value="1"/>
</dbReference>
<dbReference type="PIRSF" id="PIRSF028774">
    <property type="entry name" value="UCP028774"/>
    <property type="match status" value="1"/>
</dbReference>
<dbReference type="SUPFAM" id="SSF53335">
    <property type="entry name" value="S-adenosyl-L-methionine-dependent methyltransferases"/>
    <property type="match status" value="1"/>
</dbReference>
<organism>
    <name type="scientific">Escherichia coli O8 (strain IAI1)</name>
    <dbReference type="NCBI Taxonomy" id="585034"/>
    <lineage>
        <taxon>Bacteria</taxon>
        <taxon>Pseudomonadati</taxon>
        <taxon>Pseudomonadota</taxon>
        <taxon>Gammaproteobacteria</taxon>
        <taxon>Enterobacterales</taxon>
        <taxon>Enterobacteriaceae</taxon>
        <taxon>Escherichia</taxon>
    </lineage>
</organism>